<gene>
    <name evidence="1" type="primary">metK</name>
    <name type="ordered locus">Dtpsy_0683</name>
</gene>
<accession>B9MDD1</accession>
<proteinExistence type="inferred from homology"/>
<name>METK_ACIET</name>
<feature type="chain" id="PRO_1000196706" description="S-adenosylmethionine synthase">
    <location>
        <begin position="1"/>
        <end position="393"/>
    </location>
</feature>
<feature type="region of interest" description="Flexible loop" evidence="1">
    <location>
        <begin position="100"/>
        <end position="110"/>
    </location>
</feature>
<feature type="binding site" description="in other chain" evidence="1">
    <location>
        <position position="16"/>
    </location>
    <ligand>
        <name>ATP</name>
        <dbReference type="ChEBI" id="CHEBI:30616"/>
        <note>ligand shared between two neighboring subunits</note>
    </ligand>
</feature>
<feature type="binding site" evidence="1">
    <location>
        <position position="18"/>
    </location>
    <ligand>
        <name>Mg(2+)</name>
        <dbReference type="ChEBI" id="CHEBI:18420"/>
    </ligand>
</feature>
<feature type="binding site" evidence="1">
    <location>
        <position position="44"/>
    </location>
    <ligand>
        <name>K(+)</name>
        <dbReference type="ChEBI" id="CHEBI:29103"/>
    </ligand>
</feature>
<feature type="binding site" description="in other chain" evidence="1">
    <location>
        <position position="57"/>
    </location>
    <ligand>
        <name>L-methionine</name>
        <dbReference type="ChEBI" id="CHEBI:57844"/>
        <note>ligand shared between two neighboring subunits</note>
    </ligand>
</feature>
<feature type="binding site" description="in other chain" evidence="1">
    <location>
        <position position="100"/>
    </location>
    <ligand>
        <name>L-methionine</name>
        <dbReference type="ChEBI" id="CHEBI:57844"/>
        <note>ligand shared between two neighboring subunits</note>
    </ligand>
</feature>
<feature type="binding site" description="in other chain" evidence="1">
    <location>
        <begin position="167"/>
        <end position="169"/>
    </location>
    <ligand>
        <name>ATP</name>
        <dbReference type="ChEBI" id="CHEBI:30616"/>
        <note>ligand shared between two neighboring subunits</note>
    </ligand>
</feature>
<feature type="binding site" description="in other chain" evidence="1">
    <location>
        <begin position="238"/>
        <end position="239"/>
    </location>
    <ligand>
        <name>ATP</name>
        <dbReference type="ChEBI" id="CHEBI:30616"/>
        <note>ligand shared between two neighboring subunits</note>
    </ligand>
</feature>
<feature type="binding site" evidence="1">
    <location>
        <position position="247"/>
    </location>
    <ligand>
        <name>ATP</name>
        <dbReference type="ChEBI" id="CHEBI:30616"/>
        <note>ligand shared between two neighboring subunits</note>
    </ligand>
</feature>
<feature type="binding site" evidence="1">
    <location>
        <position position="247"/>
    </location>
    <ligand>
        <name>L-methionine</name>
        <dbReference type="ChEBI" id="CHEBI:57844"/>
        <note>ligand shared between two neighboring subunits</note>
    </ligand>
</feature>
<feature type="binding site" description="in other chain" evidence="1">
    <location>
        <begin position="253"/>
        <end position="254"/>
    </location>
    <ligand>
        <name>ATP</name>
        <dbReference type="ChEBI" id="CHEBI:30616"/>
        <note>ligand shared between two neighboring subunits</note>
    </ligand>
</feature>
<feature type="binding site" evidence="1">
    <location>
        <position position="270"/>
    </location>
    <ligand>
        <name>ATP</name>
        <dbReference type="ChEBI" id="CHEBI:30616"/>
        <note>ligand shared between two neighboring subunits</note>
    </ligand>
</feature>
<feature type="binding site" evidence="1">
    <location>
        <position position="274"/>
    </location>
    <ligand>
        <name>ATP</name>
        <dbReference type="ChEBI" id="CHEBI:30616"/>
        <note>ligand shared between two neighboring subunits</note>
    </ligand>
</feature>
<feature type="binding site" description="in other chain" evidence="1">
    <location>
        <position position="278"/>
    </location>
    <ligand>
        <name>L-methionine</name>
        <dbReference type="ChEBI" id="CHEBI:57844"/>
        <note>ligand shared between two neighboring subunits</note>
    </ligand>
</feature>
<protein>
    <recommendedName>
        <fullName evidence="1">S-adenosylmethionine synthase</fullName>
        <shortName evidence="1">AdoMet synthase</shortName>
        <ecNumber evidence="1">2.5.1.6</ecNumber>
    </recommendedName>
    <alternativeName>
        <fullName evidence="1">MAT</fullName>
    </alternativeName>
    <alternativeName>
        <fullName evidence="1">Methionine adenosyltransferase</fullName>
    </alternativeName>
</protein>
<comment type="function">
    <text evidence="1">Catalyzes the formation of S-adenosylmethionine (AdoMet) from methionine and ATP. The overall synthetic reaction is composed of two sequential steps, AdoMet formation and the subsequent tripolyphosphate hydrolysis which occurs prior to release of AdoMet from the enzyme.</text>
</comment>
<comment type="catalytic activity">
    <reaction evidence="1">
        <text>L-methionine + ATP + H2O = S-adenosyl-L-methionine + phosphate + diphosphate</text>
        <dbReference type="Rhea" id="RHEA:21080"/>
        <dbReference type="ChEBI" id="CHEBI:15377"/>
        <dbReference type="ChEBI" id="CHEBI:30616"/>
        <dbReference type="ChEBI" id="CHEBI:33019"/>
        <dbReference type="ChEBI" id="CHEBI:43474"/>
        <dbReference type="ChEBI" id="CHEBI:57844"/>
        <dbReference type="ChEBI" id="CHEBI:59789"/>
        <dbReference type="EC" id="2.5.1.6"/>
    </reaction>
</comment>
<comment type="cofactor">
    <cofactor evidence="1">
        <name>Mg(2+)</name>
        <dbReference type="ChEBI" id="CHEBI:18420"/>
    </cofactor>
    <text evidence="1">Binds 2 divalent ions per subunit.</text>
</comment>
<comment type="cofactor">
    <cofactor evidence="1">
        <name>K(+)</name>
        <dbReference type="ChEBI" id="CHEBI:29103"/>
    </cofactor>
    <text evidence="1">Binds 1 potassium ion per subunit.</text>
</comment>
<comment type="pathway">
    <text evidence="1">Amino-acid biosynthesis; S-adenosyl-L-methionine biosynthesis; S-adenosyl-L-methionine from L-methionine: step 1/1.</text>
</comment>
<comment type="subunit">
    <text evidence="1">Homotetramer; dimer of dimers.</text>
</comment>
<comment type="subcellular location">
    <subcellularLocation>
        <location evidence="1">Cytoplasm</location>
    </subcellularLocation>
</comment>
<comment type="similarity">
    <text evidence="1">Belongs to the AdoMet synthase family.</text>
</comment>
<sequence length="393" mass="42878">MANDFLFTSESVSEGHPDKVADQISDAILDAIFTQDPRSRVAAETLTNTGLVVLAGEITTNAHVDYIQVARDTIKRIGYDNTEYGIDYKGCAVLVAYDKQSNDIAQGVDHASDDHLNTGAGDQGLMFGYACDETPELMPAPIYYAHRLVERQAQLRKDGRLPFLRPDAKSQVTMRYVDGKPHSIDTVVLSTQHSPDQSETATKMKASFTEAIIEEIIKPVLPKEWLQDTKYLINPTGRFVIGGPQGDCGLTGRKIIVDTYGGACPHGGGAFSGKDPTKVDRSAAYAARYVAKNIVAAGLARQCQIQVAYAIGVARPMNITVYTEGTGVIPDDQIAQLVQEHFDLRPKGIIQMLDLLRPIYAKTAAYGHFGREEPEFTWERTDKAAALRAAAGL</sequence>
<dbReference type="EC" id="2.5.1.6" evidence="1"/>
<dbReference type="EMBL" id="CP001392">
    <property type="protein sequence ID" value="ACM32163.1"/>
    <property type="molecule type" value="Genomic_DNA"/>
</dbReference>
<dbReference type="RefSeq" id="WP_012655683.1">
    <property type="nucleotide sequence ID" value="NC_011992.1"/>
</dbReference>
<dbReference type="SMR" id="B9MDD1"/>
<dbReference type="GeneID" id="84682758"/>
<dbReference type="KEGG" id="dia:Dtpsy_0683"/>
<dbReference type="eggNOG" id="COG0192">
    <property type="taxonomic scope" value="Bacteria"/>
</dbReference>
<dbReference type="HOGENOM" id="CLU_041802_1_1_4"/>
<dbReference type="UniPathway" id="UPA00315">
    <property type="reaction ID" value="UER00080"/>
</dbReference>
<dbReference type="Proteomes" id="UP000000450">
    <property type="component" value="Chromosome"/>
</dbReference>
<dbReference type="GO" id="GO:0005737">
    <property type="term" value="C:cytoplasm"/>
    <property type="evidence" value="ECO:0007669"/>
    <property type="project" value="UniProtKB-SubCell"/>
</dbReference>
<dbReference type="GO" id="GO:0005524">
    <property type="term" value="F:ATP binding"/>
    <property type="evidence" value="ECO:0007669"/>
    <property type="project" value="UniProtKB-UniRule"/>
</dbReference>
<dbReference type="GO" id="GO:0000287">
    <property type="term" value="F:magnesium ion binding"/>
    <property type="evidence" value="ECO:0007669"/>
    <property type="project" value="UniProtKB-UniRule"/>
</dbReference>
<dbReference type="GO" id="GO:0004478">
    <property type="term" value="F:methionine adenosyltransferase activity"/>
    <property type="evidence" value="ECO:0007669"/>
    <property type="project" value="UniProtKB-UniRule"/>
</dbReference>
<dbReference type="GO" id="GO:0006730">
    <property type="term" value="P:one-carbon metabolic process"/>
    <property type="evidence" value="ECO:0007669"/>
    <property type="project" value="UniProtKB-KW"/>
</dbReference>
<dbReference type="GO" id="GO:0006556">
    <property type="term" value="P:S-adenosylmethionine biosynthetic process"/>
    <property type="evidence" value="ECO:0007669"/>
    <property type="project" value="UniProtKB-UniRule"/>
</dbReference>
<dbReference type="CDD" id="cd18079">
    <property type="entry name" value="S-AdoMet_synt"/>
    <property type="match status" value="1"/>
</dbReference>
<dbReference type="FunFam" id="3.30.300.10:FF:000003">
    <property type="entry name" value="S-adenosylmethionine synthase"/>
    <property type="match status" value="1"/>
</dbReference>
<dbReference type="FunFam" id="3.30.300.10:FF:000004">
    <property type="entry name" value="S-adenosylmethionine synthase"/>
    <property type="match status" value="1"/>
</dbReference>
<dbReference type="Gene3D" id="3.30.300.10">
    <property type="match status" value="3"/>
</dbReference>
<dbReference type="HAMAP" id="MF_00086">
    <property type="entry name" value="S_AdoMet_synth1"/>
    <property type="match status" value="1"/>
</dbReference>
<dbReference type="InterPro" id="IPR022631">
    <property type="entry name" value="ADOMET_SYNTHASE_CS"/>
</dbReference>
<dbReference type="InterPro" id="IPR022630">
    <property type="entry name" value="S-AdoMet_synt_C"/>
</dbReference>
<dbReference type="InterPro" id="IPR022629">
    <property type="entry name" value="S-AdoMet_synt_central"/>
</dbReference>
<dbReference type="InterPro" id="IPR022628">
    <property type="entry name" value="S-AdoMet_synt_N"/>
</dbReference>
<dbReference type="InterPro" id="IPR002133">
    <property type="entry name" value="S-AdoMet_synthetase"/>
</dbReference>
<dbReference type="InterPro" id="IPR022636">
    <property type="entry name" value="S-AdoMet_synthetase_sfam"/>
</dbReference>
<dbReference type="NCBIfam" id="TIGR01034">
    <property type="entry name" value="metK"/>
    <property type="match status" value="1"/>
</dbReference>
<dbReference type="PANTHER" id="PTHR11964">
    <property type="entry name" value="S-ADENOSYLMETHIONINE SYNTHETASE"/>
    <property type="match status" value="1"/>
</dbReference>
<dbReference type="Pfam" id="PF02773">
    <property type="entry name" value="S-AdoMet_synt_C"/>
    <property type="match status" value="1"/>
</dbReference>
<dbReference type="Pfam" id="PF02772">
    <property type="entry name" value="S-AdoMet_synt_M"/>
    <property type="match status" value="1"/>
</dbReference>
<dbReference type="Pfam" id="PF00438">
    <property type="entry name" value="S-AdoMet_synt_N"/>
    <property type="match status" value="1"/>
</dbReference>
<dbReference type="PIRSF" id="PIRSF000497">
    <property type="entry name" value="MAT"/>
    <property type="match status" value="1"/>
</dbReference>
<dbReference type="SUPFAM" id="SSF55973">
    <property type="entry name" value="S-adenosylmethionine synthetase"/>
    <property type="match status" value="3"/>
</dbReference>
<dbReference type="PROSITE" id="PS00376">
    <property type="entry name" value="ADOMET_SYNTHASE_1"/>
    <property type="match status" value="1"/>
</dbReference>
<dbReference type="PROSITE" id="PS00377">
    <property type="entry name" value="ADOMET_SYNTHASE_2"/>
    <property type="match status" value="1"/>
</dbReference>
<evidence type="ECO:0000255" key="1">
    <source>
        <dbReference type="HAMAP-Rule" id="MF_00086"/>
    </source>
</evidence>
<keyword id="KW-0067">ATP-binding</keyword>
<keyword id="KW-0963">Cytoplasm</keyword>
<keyword id="KW-0460">Magnesium</keyword>
<keyword id="KW-0479">Metal-binding</keyword>
<keyword id="KW-0547">Nucleotide-binding</keyword>
<keyword id="KW-0554">One-carbon metabolism</keyword>
<keyword id="KW-0630">Potassium</keyword>
<keyword id="KW-1185">Reference proteome</keyword>
<keyword id="KW-0808">Transferase</keyword>
<organism>
    <name type="scientific">Acidovorax ebreus (strain TPSY)</name>
    <name type="common">Diaphorobacter sp. (strain TPSY)</name>
    <dbReference type="NCBI Taxonomy" id="535289"/>
    <lineage>
        <taxon>Bacteria</taxon>
        <taxon>Pseudomonadati</taxon>
        <taxon>Pseudomonadota</taxon>
        <taxon>Betaproteobacteria</taxon>
        <taxon>Burkholderiales</taxon>
        <taxon>Comamonadaceae</taxon>
        <taxon>Diaphorobacter</taxon>
    </lineage>
</organism>
<reference key="1">
    <citation type="submission" date="2009-01" db="EMBL/GenBank/DDBJ databases">
        <title>Complete sequence of Diaphorobacter sp. TPSY.</title>
        <authorList>
            <consortium name="US DOE Joint Genome Institute"/>
            <person name="Lucas S."/>
            <person name="Copeland A."/>
            <person name="Lapidus A."/>
            <person name="Glavina del Rio T."/>
            <person name="Tice H."/>
            <person name="Bruce D."/>
            <person name="Goodwin L."/>
            <person name="Pitluck S."/>
            <person name="Chertkov O."/>
            <person name="Brettin T."/>
            <person name="Detter J.C."/>
            <person name="Han C."/>
            <person name="Larimer F."/>
            <person name="Land M."/>
            <person name="Hauser L."/>
            <person name="Kyrpides N."/>
            <person name="Mikhailova N."/>
            <person name="Coates J.D."/>
        </authorList>
    </citation>
    <scope>NUCLEOTIDE SEQUENCE [LARGE SCALE GENOMIC DNA]</scope>
    <source>
        <strain>TPSY</strain>
    </source>
</reference>